<organism>
    <name type="scientific">Phytophthora infestans (strain T30-4)</name>
    <name type="common">Potato late blight agent</name>
    <dbReference type="NCBI Taxonomy" id="403677"/>
    <lineage>
        <taxon>Eukaryota</taxon>
        <taxon>Sar</taxon>
        <taxon>Stramenopiles</taxon>
        <taxon>Oomycota</taxon>
        <taxon>Peronosporales</taxon>
        <taxon>Peronosporaceae</taxon>
        <taxon>Phytophthora</taxon>
    </lineage>
</organism>
<reference key="1">
    <citation type="journal article" date="2009" name="Nature">
        <title>Genome sequence and analysis of the Irish potato famine pathogen Phytophthora infestans.</title>
        <authorList>
            <consortium name="The Broad Institute Genome Sequencing Platform"/>
            <person name="Haas B.J."/>
            <person name="Kamoun S."/>
            <person name="Zody M.C."/>
            <person name="Jiang R.H."/>
            <person name="Handsaker R.E."/>
            <person name="Cano L.M."/>
            <person name="Grabherr M."/>
            <person name="Kodira C.D."/>
            <person name="Raffaele S."/>
            <person name="Torto-Alalibo T."/>
            <person name="Bozkurt T.O."/>
            <person name="Ah-Fong A.M."/>
            <person name="Alvarado L."/>
            <person name="Anderson V.L."/>
            <person name="Armstrong M.R."/>
            <person name="Avrova A."/>
            <person name="Baxter L."/>
            <person name="Beynon J."/>
            <person name="Boevink P.C."/>
            <person name="Bollmann S.R."/>
            <person name="Bos J.I."/>
            <person name="Bulone V."/>
            <person name="Cai G."/>
            <person name="Cakir C."/>
            <person name="Carrington J.C."/>
            <person name="Chawner M."/>
            <person name="Conti L."/>
            <person name="Costanzo S."/>
            <person name="Ewan R."/>
            <person name="Fahlgren N."/>
            <person name="Fischbach M.A."/>
            <person name="Fugelstad J."/>
            <person name="Gilroy E.M."/>
            <person name="Gnerre S."/>
            <person name="Green P.J."/>
            <person name="Grenville-Briggs L.J."/>
            <person name="Griffith J."/>
            <person name="Grunwald N.J."/>
            <person name="Horn K."/>
            <person name="Horner N.R."/>
            <person name="Hu C.H."/>
            <person name="Huitema E."/>
            <person name="Jeong D.H."/>
            <person name="Jones A.M."/>
            <person name="Jones J.D."/>
            <person name="Jones R.W."/>
            <person name="Karlsson E.K."/>
            <person name="Kunjeti S.G."/>
            <person name="Lamour K."/>
            <person name="Liu Z."/>
            <person name="Ma L."/>
            <person name="Maclean D."/>
            <person name="Chibucos M.C."/>
            <person name="McDonald H."/>
            <person name="McWalters J."/>
            <person name="Meijer H.J."/>
            <person name="Morgan W."/>
            <person name="Morris P.F."/>
            <person name="Munro C.A."/>
            <person name="O'Neill K."/>
            <person name="Ospina-Giraldo M."/>
            <person name="Pinzon A."/>
            <person name="Pritchard L."/>
            <person name="Ramsahoye B."/>
            <person name="Ren Q."/>
            <person name="Restrepo S."/>
            <person name="Roy S."/>
            <person name="Sadanandom A."/>
            <person name="Savidor A."/>
            <person name="Schornack S."/>
            <person name="Schwartz D.C."/>
            <person name="Schumann U.D."/>
            <person name="Schwessinger B."/>
            <person name="Seyer L."/>
            <person name="Sharpe T."/>
            <person name="Silvar C."/>
            <person name="Song J."/>
            <person name="Studholme D.J."/>
            <person name="Sykes S."/>
            <person name="Thines M."/>
            <person name="van de Vondervoort P.J."/>
            <person name="Phuntumart V."/>
            <person name="Wawra S."/>
            <person name="Weide R."/>
            <person name="Win J."/>
            <person name="Young C."/>
            <person name="Zhou S."/>
            <person name="Fry W."/>
            <person name="Meyers B.C."/>
            <person name="van West P."/>
            <person name="Ristaino J."/>
            <person name="Govers F."/>
            <person name="Birch P.R."/>
            <person name="Whisson S.C."/>
            <person name="Judelson H.S."/>
            <person name="Nusbaum C."/>
        </authorList>
    </citation>
    <scope>NUCLEOTIDE SEQUENCE [LARGE SCALE GENOMIC DNA]</scope>
    <scope>DOMAIN</scope>
    <scope>INDUCTION</scope>
    <source>
        <strain>T30-4</strain>
    </source>
</reference>
<reference key="2">
    <citation type="journal article" date="2018" name="MBio">
        <title>The Phytophthora infestans haustorium is a site for secretion of viverse classes of infection-associated proteins.</title>
        <authorList>
            <person name="Wang S."/>
            <person name="Welsh L."/>
            <person name="Thorpe P."/>
            <person name="Whisson S.C."/>
            <person name="Boevink P.C."/>
            <person name="Birch P.R.J."/>
        </authorList>
    </citation>
    <scope>DOMAIN</scope>
    <scope>SUBCELLULAR LOCATION</scope>
</reference>
<reference key="3">
    <citation type="journal article" date="2019" name="J. Exp. Bot.">
        <title>Phytophthora infestans RXLR effectors act in concert at diverse subcellular locations to enhance host colonization.</title>
        <authorList>
            <person name="Wang S."/>
            <person name="McLellan H."/>
            <person name="Bukharova T."/>
            <person name="He Q."/>
            <person name="Murphy F."/>
            <person name="Shi J."/>
            <person name="Sun S."/>
            <person name="van Weymers P."/>
            <person name="Ren Y."/>
            <person name="Thilliez G."/>
            <person name="Wang H."/>
            <person name="Chen X."/>
            <person name="Engelhardt S."/>
            <person name="Vleeshouwers V."/>
            <person name="Gilroy E.M."/>
            <person name="Whisson S.C."/>
            <person name="Hein I."/>
            <person name="Wang X."/>
            <person name="Tian Z."/>
            <person name="Birch P.R.J."/>
            <person name="Boevink P.C."/>
        </authorList>
    </citation>
    <scope>FUNCTION</scope>
    <scope>SUBCELLULAR LOCATION</scope>
</reference>
<reference key="4">
    <citation type="journal article" date="2019" name="Plant Physiol.">
        <title>Phytophthora infestans RXLR effectors target parallel steps in an immune signal transduction pathway.</title>
        <authorList>
            <person name="Ren Y."/>
            <person name="Armstrong M."/>
            <person name="Qi Y."/>
            <person name="McLellan H."/>
            <person name="Zhong C."/>
            <person name="Du B."/>
            <person name="Birch P.R.J."/>
            <person name="Tian Z."/>
        </authorList>
    </citation>
    <scope>FUNCTION</scope>
    <scope>INTERACTION WITH HOST MAPKBETA2</scope>
    <scope>SUBCELLULAR LOCATION</scope>
</reference>
<dbReference type="EMBL" id="DS028136">
    <property type="protein sequence ID" value="EEY57148.1"/>
    <property type="molecule type" value="Genomic_DNA"/>
</dbReference>
<dbReference type="RefSeq" id="XP_002901758.1">
    <property type="nucleotide sequence ID" value="XM_002901712.1"/>
</dbReference>
<dbReference type="SMR" id="D0NFU7"/>
<dbReference type="STRING" id="403677.D0NFU7"/>
<dbReference type="EnsemblProtists" id="PITG_22926T0">
    <property type="protein sequence ID" value="PITG_22926T0"/>
    <property type="gene ID" value="PITG_22926"/>
</dbReference>
<dbReference type="GeneID" id="9476146"/>
<dbReference type="KEGG" id="pif:PITG_22926"/>
<dbReference type="VEuPathDB" id="FungiDB:PITG_22926"/>
<dbReference type="eggNOG" id="ENOG502RGQG">
    <property type="taxonomic scope" value="Eukaryota"/>
</dbReference>
<dbReference type="HOGENOM" id="CLU_122622_0_0_1"/>
<dbReference type="InParanoid" id="D0NFU7"/>
<dbReference type="OMA" id="HDSAQSK"/>
<dbReference type="OrthoDB" id="124027at2759"/>
<dbReference type="Proteomes" id="UP000006643">
    <property type="component" value="Partially assembled WGS sequence"/>
</dbReference>
<dbReference type="GO" id="GO:0005576">
    <property type="term" value="C:extracellular region"/>
    <property type="evidence" value="ECO:0007669"/>
    <property type="project" value="UniProtKB-SubCell"/>
</dbReference>
<dbReference type="GO" id="GO:0044196">
    <property type="term" value="C:host cell nucleolus"/>
    <property type="evidence" value="ECO:0007669"/>
    <property type="project" value="UniProtKB-SubCell"/>
</dbReference>
<evidence type="ECO:0000255" key="1"/>
<evidence type="ECO:0000269" key="2">
    <source>
    </source>
</evidence>
<evidence type="ECO:0000269" key="3">
    <source>
    </source>
</evidence>
<evidence type="ECO:0000269" key="4">
    <source>
    </source>
</evidence>
<evidence type="ECO:0000269" key="5">
    <source>
    </source>
</evidence>
<evidence type="ECO:0000303" key="6">
    <source>
    </source>
</evidence>
<evidence type="ECO:0000305" key="7"/>
<evidence type="ECO:0000305" key="8">
    <source>
    </source>
</evidence>
<proteinExistence type="evidence at protein level"/>
<accession>D0NFU7</accession>
<feature type="signal peptide" evidence="1">
    <location>
        <begin position="1"/>
        <end position="20"/>
    </location>
</feature>
<feature type="chain" id="PRO_5003013353" description="Secreted RxLR effector protein PITG_22926">
    <location>
        <begin position="21"/>
        <end position="198"/>
    </location>
</feature>
<feature type="short sequence motif" description="RxLR-dEER" evidence="8">
    <location>
        <begin position="43"/>
        <end position="52"/>
    </location>
</feature>
<gene>
    <name type="ORF">PITG_22926</name>
</gene>
<comment type="function">
    <text evidence="4 5">Secreted effector that promotes P.infestans colonization of plant host (PubMed:30329083, PubMed:31217198). Specifically suppresses Avr4/Cf4- and AvrPto/Pto-triggered cell death (PubMed:31217198). Targets the potato MAP3Kbeta2 kinase, a positive regulator of cell death associated with plant immunity, and perturbs signaling pathways triggered by MAP3Kbeta2 (PubMed:31217198).</text>
</comment>
<comment type="subunit">
    <text evidence="5">Interacts with host MAP3Kbeta2 in the nucleoplasm.</text>
</comment>
<comment type="subcellular location">
    <subcellularLocation>
        <location evidence="3 4 5">Secreted</location>
    </subcellularLocation>
    <subcellularLocation>
        <location evidence="3 4 5">Host nucleus</location>
    </subcellularLocation>
    <subcellularLocation>
        <location evidence="3 4">Host nucleus</location>
        <location evidence="3 4">Host nucleolus</location>
    </subcellularLocation>
    <text evidence="3 4">Is secreted from haustoria to be delivered into host cells.</text>
</comment>
<comment type="induction">
    <text evidence="2">Expression is up-regulated during the early plant infection stages.</text>
</comment>
<comment type="domain">
    <text evidence="8">The RxLR-dEER motif acts to carry the protein into the host cell cytoplasm through binding to cell surface phosphatidylinositol-3-phosphate.</text>
</comment>
<comment type="similarity">
    <text evidence="7">Belongs to the RxLR effector family.</text>
</comment>
<name>RXLAC_PHYIT</name>
<sequence length="198" mass="22462">MLRSFLLIVATVSLFGQCKPLPLATSPVSDAVRAPHRSTHETRFLRTNDEERGATMTLAGVLRDKAQTKQLLTSWLNSGKSVPSVSNKLGLKRMSLEQAIHHENWKALTTFQRMKSKKAKAYAKYGTGYQTEAKTKENLLQWVMRGDSPKEVSSTLGLLGLSRRKIIDHQNYEAFRTFLKYRKQWAEMQGNGFTKLTT</sequence>
<keyword id="KW-1048">Host nucleus</keyword>
<keyword id="KW-1185">Reference proteome</keyword>
<keyword id="KW-0964">Secreted</keyword>
<keyword id="KW-0732">Signal</keyword>
<keyword id="KW-0843">Virulence</keyword>
<protein>
    <recommendedName>
        <fullName evidence="6">Secreted RxLR effector protein PITG_22926</fullName>
    </recommendedName>
</protein>